<keyword id="KW-1003">Cell membrane</keyword>
<keyword id="KW-0285">Flavoprotein</keyword>
<keyword id="KW-0288">FMN</keyword>
<keyword id="KW-0472">Membrane</keyword>
<keyword id="KW-0560">Oxidoreductase</keyword>
<keyword id="KW-0665">Pyrimidine biosynthesis</keyword>
<reference key="1">
    <citation type="journal article" date="2008" name="PLoS ONE">
        <title>Comparative analysis of Acinetobacters: three genomes for three lifestyles.</title>
        <authorList>
            <person name="Vallenet D."/>
            <person name="Nordmann P."/>
            <person name="Barbe V."/>
            <person name="Poirel L."/>
            <person name="Mangenot S."/>
            <person name="Bataille E."/>
            <person name="Dossat C."/>
            <person name="Gas S."/>
            <person name="Kreimeyer A."/>
            <person name="Lenoble P."/>
            <person name="Oztas S."/>
            <person name="Poulain J."/>
            <person name="Segurens B."/>
            <person name="Robert C."/>
            <person name="Abergel C."/>
            <person name="Claverie J.-M."/>
            <person name="Raoult D."/>
            <person name="Medigue C."/>
            <person name="Weissenbach J."/>
            <person name="Cruveiller S."/>
        </authorList>
    </citation>
    <scope>NUCLEOTIDE SEQUENCE [LARGE SCALE GENOMIC DNA]</scope>
    <source>
        <strain>SDF</strain>
    </source>
</reference>
<name>PYRD_ACIBS</name>
<organism>
    <name type="scientific">Acinetobacter baumannii (strain SDF)</name>
    <dbReference type="NCBI Taxonomy" id="509170"/>
    <lineage>
        <taxon>Bacteria</taxon>
        <taxon>Pseudomonadati</taxon>
        <taxon>Pseudomonadota</taxon>
        <taxon>Gammaproteobacteria</taxon>
        <taxon>Moraxellales</taxon>
        <taxon>Moraxellaceae</taxon>
        <taxon>Acinetobacter</taxon>
        <taxon>Acinetobacter calcoaceticus/baumannii complex</taxon>
    </lineage>
</organism>
<comment type="function">
    <text evidence="1">Catalyzes the conversion of dihydroorotate to orotate with quinone as electron acceptor.</text>
</comment>
<comment type="catalytic activity">
    <reaction evidence="1">
        <text>(S)-dihydroorotate + a quinone = orotate + a quinol</text>
        <dbReference type="Rhea" id="RHEA:30187"/>
        <dbReference type="ChEBI" id="CHEBI:24646"/>
        <dbReference type="ChEBI" id="CHEBI:30839"/>
        <dbReference type="ChEBI" id="CHEBI:30864"/>
        <dbReference type="ChEBI" id="CHEBI:132124"/>
        <dbReference type="EC" id="1.3.5.2"/>
    </reaction>
</comment>
<comment type="cofactor">
    <cofactor evidence="1">
        <name>FMN</name>
        <dbReference type="ChEBI" id="CHEBI:58210"/>
    </cofactor>
    <text evidence="1">Binds 1 FMN per subunit.</text>
</comment>
<comment type="pathway">
    <text evidence="1">Pyrimidine metabolism; UMP biosynthesis via de novo pathway; orotate from (S)-dihydroorotate (quinone route): step 1/1.</text>
</comment>
<comment type="subunit">
    <text evidence="1">Monomer.</text>
</comment>
<comment type="subcellular location">
    <subcellularLocation>
        <location evidence="1">Cell membrane</location>
        <topology evidence="1">Peripheral membrane protein</topology>
    </subcellularLocation>
</comment>
<comment type="similarity">
    <text evidence="1">Belongs to the dihydroorotate dehydrogenase family. Type 2 subfamily.</text>
</comment>
<feature type="chain" id="PRO_1000100241" description="Dihydroorotate dehydrogenase (quinone)">
    <location>
        <begin position="1"/>
        <end position="334"/>
    </location>
</feature>
<feature type="active site" description="Nucleophile" evidence="1">
    <location>
        <position position="172"/>
    </location>
</feature>
<feature type="binding site" evidence="1">
    <location>
        <begin position="59"/>
        <end position="63"/>
    </location>
    <ligand>
        <name>FMN</name>
        <dbReference type="ChEBI" id="CHEBI:58210"/>
    </ligand>
</feature>
<feature type="binding site" evidence="1">
    <location>
        <position position="63"/>
    </location>
    <ligand>
        <name>substrate</name>
    </ligand>
</feature>
<feature type="binding site" evidence="1">
    <location>
        <position position="83"/>
    </location>
    <ligand>
        <name>FMN</name>
        <dbReference type="ChEBI" id="CHEBI:58210"/>
    </ligand>
</feature>
<feature type="binding site" evidence="1">
    <location>
        <begin position="108"/>
        <end position="112"/>
    </location>
    <ligand>
        <name>substrate</name>
    </ligand>
</feature>
<feature type="binding site" evidence="1">
    <location>
        <position position="136"/>
    </location>
    <ligand>
        <name>FMN</name>
        <dbReference type="ChEBI" id="CHEBI:58210"/>
    </ligand>
</feature>
<feature type="binding site" evidence="1">
    <location>
        <position position="169"/>
    </location>
    <ligand>
        <name>FMN</name>
        <dbReference type="ChEBI" id="CHEBI:58210"/>
    </ligand>
</feature>
<feature type="binding site" evidence="1">
    <location>
        <position position="169"/>
    </location>
    <ligand>
        <name>substrate</name>
    </ligand>
</feature>
<feature type="binding site" evidence="1">
    <location>
        <position position="174"/>
    </location>
    <ligand>
        <name>substrate</name>
    </ligand>
</feature>
<feature type="binding site" evidence="1">
    <location>
        <position position="214"/>
    </location>
    <ligand>
        <name>FMN</name>
        <dbReference type="ChEBI" id="CHEBI:58210"/>
    </ligand>
</feature>
<feature type="binding site" evidence="1">
    <location>
        <position position="242"/>
    </location>
    <ligand>
        <name>FMN</name>
        <dbReference type="ChEBI" id="CHEBI:58210"/>
    </ligand>
</feature>
<feature type="binding site" evidence="1">
    <location>
        <begin position="243"/>
        <end position="244"/>
    </location>
    <ligand>
        <name>substrate</name>
    </ligand>
</feature>
<feature type="binding site" evidence="1">
    <location>
        <position position="265"/>
    </location>
    <ligand>
        <name>FMN</name>
        <dbReference type="ChEBI" id="CHEBI:58210"/>
    </ligand>
</feature>
<feature type="binding site" evidence="1">
    <location>
        <position position="294"/>
    </location>
    <ligand>
        <name>FMN</name>
        <dbReference type="ChEBI" id="CHEBI:58210"/>
    </ligand>
</feature>
<feature type="binding site" evidence="1">
    <location>
        <begin position="315"/>
        <end position="316"/>
    </location>
    <ligand>
        <name>FMN</name>
        <dbReference type="ChEBI" id="CHEBI:58210"/>
    </ligand>
</feature>
<dbReference type="EC" id="1.3.5.2" evidence="1"/>
<dbReference type="EMBL" id="CU468230">
    <property type="protein sequence ID" value="CAP00621.1"/>
    <property type="molecule type" value="Genomic_DNA"/>
</dbReference>
<dbReference type="SMR" id="B0VKB8"/>
<dbReference type="KEGG" id="abm:ABSDF1275"/>
<dbReference type="HOGENOM" id="CLU_013640_2_0_6"/>
<dbReference type="UniPathway" id="UPA00070">
    <property type="reaction ID" value="UER00946"/>
</dbReference>
<dbReference type="Proteomes" id="UP000001741">
    <property type="component" value="Chromosome"/>
</dbReference>
<dbReference type="GO" id="GO:0005737">
    <property type="term" value="C:cytoplasm"/>
    <property type="evidence" value="ECO:0007669"/>
    <property type="project" value="InterPro"/>
</dbReference>
<dbReference type="GO" id="GO:0005886">
    <property type="term" value="C:plasma membrane"/>
    <property type="evidence" value="ECO:0007669"/>
    <property type="project" value="UniProtKB-SubCell"/>
</dbReference>
<dbReference type="GO" id="GO:0106430">
    <property type="term" value="F:dihydroorotate dehydrogenase (quinone) activity"/>
    <property type="evidence" value="ECO:0007669"/>
    <property type="project" value="UniProtKB-EC"/>
</dbReference>
<dbReference type="GO" id="GO:0006207">
    <property type="term" value="P:'de novo' pyrimidine nucleobase biosynthetic process"/>
    <property type="evidence" value="ECO:0007669"/>
    <property type="project" value="InterPro"/>
</dbReference>
<dbReference type="GO" id="GO:0044205">
    <property type="term" value="P:'de novo' UMP biosynthetic process"/>
    <property type="evidence" value="ECO:0007669"/>
    <property type="project" value="UniProtKB-UniRule"/>
</dbReference>
<dbReference type="CDD" id="cd04738">
    <property type="entry name" value="DHOD_2_like"/>
    <property type="match status" value="1"/>
</dbReference>
<dbReference type="FunFam" id="3.20.20.70:FF:000028">
    <property type="entry name" value="Dihydroorotate dehydrogenase (quinone)"/>
    <property type="match status" value="1"/>
</dbReference>
<dbReference type="Gene3D" id="3.20.20.70">
    <property type="entry name" value="Aldolase class I"/>
    <property type="match status" value="1"/>
</dbReference>
<dbReference type="HAMAP" id="MF_00225">
    <property type="entry name" value="DHO_dh_type2"/>
    <property type="match status" value="1"/>
</dbReference>
<dbReference type="InterPro" id="IPR013785">
    <property type="entry name" value="Aldolase_TIM"/>
</dbReference>
<dbReference type="InterPro" id="IPR050074">
    <property type="entry name" value="DHO_dehydrogenase"/>
</dbReference>
<dbReference type="InterPro" id="IPR012135">
    <property type="entry name" value="Dihydroorotate_DH_1_2"/>
</dbReference>
<dbReference type="InterPro" id="IPR005719">
    <property type="entry name" value="Dihydroorotate_DH_2"/>
</dbReference>
<dbReference type="InterPro" id="IPR005720">
    <property type="entry name" value="Dihydroorotate_DH_cat"/>
</dbReference>
<dbReference type="InterPro" id="IPR001295">
    <property type="entry name" value="Dihydroorotate_DH_CS"/>
</dbReference>
<dbReference type="NCBIfam" id="NF003644">
    <property type="entry name" value="PRK05286.1-1"/>
    <property type="match status" value="1"/>
</dbReference>
<dbReference type="NCBIfam" id="NF003645">
    <property type="entry name" value="PRK05286.1-2"/>
    <property type="match status" value="1"/>
</dbReference>
<dbReference type="NCBIfam" id="NF003646">
    <property type="entry name" value="PRK05286.1-4"/>
    <property type="match status" value="1"/>
</dbReference>
<dbReference type="NCBIfam" id="NF003652">
    <property type="entry name" value="PRK05286.2-5"/>
    <property type="match status" value="1"/>
</dbReference>
<dbReference type="NCBIfam" id="TIGR01036">
    <property type="entry name" value="pyrD_sub2"/>
    <property type="match status" value="1"/>
</dbReference>
<dbReference type="PANTHER" id="PTHR48109:SF4">
    <property type="entry name" value="DIHYDROOROTATE DEHYDROGENASE (QUINONE), MITOCHONDRIAL"/>
    <property type="match status" value="1"/>
</dbReference>
<dbReference type="PANTHER" id="PTHR48109">
    <property type="entry name" value="DIHYDROOROTATE DEHYDROGENASE (QUINONE), MITOCHONDRIAL-RELATED"/>
    <property type="match status" value="1"/>
</dbReference>
<dbReference type="Pfam" id="PF01180">
    <property type="entry name" value="DHO_dh"/>
    <property type="match status" value="1"/>
</dbReference>
<dbReference type="PIRSF" id="PIRSF000164">
    <property type="entry name" value="DHO_oxidase"/>
    <property type="match status" value="1"/>
</dbReference>
<dbReference type="SUPFAM" id="SSF51395">
    <property type="entry name" value="FMN-linked oxidoreductases"/>
    <property type="match status" value="1"/>
</dbReference>
<dbReference type="PROSITE" id="PS00911">
    <property type="entry name" value="DHODEHASE_1"/>
    <property type="match status" value="1"/>
</dbReference>
<dbReference type="PROSITE" id="PS00912">
    <property type="entry name" value="DHODEHASE_2"/>
    <property type="match status" value="1"/>
</dbReference>
<gene>
    <name evidence="1" type="primary">pyrD</name>
    <name type="ordered locus">ABSDF1275</name>
</gene>
<evidence type="ECO:0000255" key="1">
    <source>
        <dbReference type="HAMAP-Rule" id="MF_00225"/>
    </source>
</evidence>
<protein>
    <recommendedName>
        <fullName evidence="1">Dihydroorotate dehydrogenase (quinone)</fullName>
        <ecNumber evidence="1">1.3.5.2</ecNumber>
    </recommendedName>
    <alternativeName>
        <fullName evidence="1">DHOdehase</fullName>
        <shortName evidence="1">DHOD</shortName>
        <shortName evidence="1">DHODase</shortName>
    </alternativeName>
    <alternativeName>
        <fullName evidence="1">Dihydroorotate oxidase</fullName>
    </alternativeName>
</protein>
<sequence>MLYSLARPMLFSLAPERAHELTLSMLDKAHKLGIMRQTVEAKPTTCMGIEFPNPVGLAAGLDKNGAHIDALAGLGFGFIEIGTITPHPQSGNPKPRLFRIPEAKAIINRMGFNNDGVDKLIENVKASKFRGILGINIGKNADTPVEKAVDDYLICLEKVYNYASYITVNISSPNTKNLRSLQSGDALTELLQALKARQLELAEQYNHYVPLVLKVAPDLTAEDVEFISAQLLDFKIDGLIVTNTTLSREGVENLPYGNESGGLSGAPVFEKSTECLRLFAQTLKGQISLIGVGGILSGEQAAAKQQAGATLVQIYSGLIYTGPTLVKQCVEAMT</sequence>
<accession>B0VKB8</accession>
<proteinExistence type="inferred from homology"/>